<keyword id="KW-0686">Riboflavin biosynthesis</keyword>
<keyword id="KW-0808">Transferase</keyword>
<dbReference type="EC" id="2.5.1.78" evidence="1"/>
<dbReference type="EMBL" id="CP000742">
    <property type="protein sequence ID" value="ABR54965.1"/>
    <property type="molecule type" value="Genomic_DNA"/>
</dbReference>
<dbReference type="RefSeq" id="WP_012065880.1">
    <property type="nucleotide sequence ID" value="NC_009634.1"/>
</dbReference>
<dbReference type="SMR" id="A6UR43"/>
<dbReference type="STRING" id="406327.Mevan_1065"/>
<dbReference type="GeneID" id="5325396"/>
<dbReference type="KEGG" id="mvn:Mevan_1065"/>
<dbReference type="eggNOG" id="arCOG01323">
    <property type="taxonomic scope" value="Archaea"/>
</dbReference>
<dbReference type="HOGENOM" id="CLU_089358_3_1_2"/>
<dbReference type="OrthoDB" id="7610at2157"/>
<dbReference type="UniPathway" id="UPA00275">
    <property type="reaction ID" value="UER00404"/>
</dbReference>
<dbReference type="Proteomes" id="UP000001107">
    <property type="component" value="Chromosome"/>
</dbReference>
<dbReference type="GO" id="GO:0009349">
    <property type="term" value="C:riboflavin synthase complex"/>
    <property type="evidence" value="ECO:0007669"/>
    <property type="project" value="InterPro"/>
</dbReference>
<dbReference type="GO" id="GO:0000906">
    <property type="term" value="F:6,7-dimethyl-8-ribityllumazine synthase activity"/>
    <property type="evidence" value="ECO:0007669"/>
    <property type="project" value="UniProtKB-UniRule"/>
</dbReference>
<dbReference type="GO" id="GO:0009231">
    <property type="term" value="P:riboflavin biosynthetic process"/>
    <property type="evidence" value="ECO:0007669"/>
    <property type="project" value="UniProtKB-UniRule"/>
</dbReference>
<dbReference type="CDD" id="cd09211">
    <property type="entry name" value="Lumazine_synthase_archaeal"/>
    <property type="match status" value="1"/>
</dbReference>
<dbReference type="FunFam" id="3.40.50.960:FF:000003">
    <property type="entry name" value="6,7-dimethyl-8-ribityllumazine synthase"/>
    <property type="match status" value="1"/>
</dbReference>
<dbReference type="Gene3D" id="3.40.50.960">
    <property type="entry name" value="Lumazine/riboflavin synthase"/>
    <property type="match status" value="1"/>
</dbReference>
<dbReference type="HAMAP" id="MF_00178">
    <property type="entry name" value="Lumazine_synth"/>
    <property type="match status" value="1"/>
</dbReference>
<dbReference type="InterPro" id="IPR034964">
    <property type="entry name" value="LS"/>
</dbReference>
<dbReference type="InterPro" id="IPR002180">
    <property type="entry name" value="LS/RS"/>
</dbReference>
<dbReference type="InterPro" id="IPR036467">
    <property type="entry name" value="LS/RS_sf"/>
</dbReference>
<dbReference type="NCBIfam" id="TIGR00114">
    <property type="entry name" value="lumazine-synth"/>
    <property type="match status" value="1"/>
</dbReference>
<dbReference type="PANTHER" id="PTHR21058:SF0">
    <property type="entry name" value="6,7-DIMETHYL-8-RIBITYLLUMAZINE SYNTHASE"/>
    <property type="match status" value="1"/>
</dbReference>
<dbReference type="PANTHER" id="PTHR21058">
    <property type="entry name" value="6,7-DIMETHYL-8-RIBITYLLUMAZINE SYNTHASE DMRL SYNTHASE LUMAZINE SYNTHASE"/>
    <property type="match status" value="1"/>
</dbReference>
<dbReference type="Pfam" id="PF00885">
    <property type="entry name" value="DMRL_synthase"/>
    <property type="match status" value="1"/>
</dbReference>
<dbReference type="SUPFAM" id="SSF52121">
    <property type="entry name" value="Lumazine synthase"/>
    <property type="match status" value="1"/>
</dbReference>
<protein>
    <recommendedName>
        <fullName evidence="1">6,7-dimethyl-8-ribityllumazine synthase</fullName>
        <shortName evidence="1">DMRL synthase</shortName>
        <shortName evidence="1">LS</shortName>
        <shortName evidence="1">Lumazine synthase</shortName>
        <ecNumber evidence="1">2.5.1.78</ecNumber>
    </recommendedName>
</protein>
<proteinExistence type="inferred from homology"/>
<feature type="chain" id="PRO_1000040453" description="6,7-dimethyl-8-ribityllumazine synthase">
    <location>
        <begin position="1"/>
        <end position="140"/>
    </location>
</feature>
<feature type="active site" description="Proton donor" evidence="1">
    <location>
        <position position="75"/>
    </location>
</feature>
<feature type="binding site" evidence="1">
    <location>
        <position position="11"/>
    </location>
    <ligand>
        <name>5-amino-6-(D-ribitylamino)uracil</name>
        <dbReference type="ChEBI" id="CHEBI:15934"/>
    </ligand>
</feature>
<feature type="binding site" evidence="1">
    <location>
        <begin position="43"/>
        <end position="45"/>
    </location>
    <ligand>
        <name>5-amino-6-(D-ribitylamino)uracil</name>
        <dbReference type="ChEBI" id="CHEBI:15934"/>
    </ligand>
</feature>
<feature type="binding site" evidence="1">
    <location>
        <begin position="67"/>
        <end position="69"/>
    </location>
    <ligand>
        <name>5-amino-6-(D-ribitylamino)uracil</name>
        <dbReference type="ChEBI" id="CHEBI:15934"/>
    </ligand>
</feature>
<feature type="binding site" evidence="1">
    <location>
        <begin position="72"/>
        <end position="73"/>
    </location>
    <ligand>
        <name>(2S)-2-hydroxy-3-oxobutyl phosphate</name>
        <dbReference type="ChEBI" id="CHEBI:58830"/>
    </ligand>
</feature>
<feature type="binding site" evidence="1">
    <location>
        <position position="100"/>
    </location>
    <ligand>
        <name>5-amino-6-(D-ribitylamino)uracil</name>
        <dbReference type="ChEBI" id="CHEBI:15934"/>
    </ligand>
</feature>
<feature type="binding site" evidence="1">
    <location>
        <position position="115"/>
    </location>
    <ligand>
        <name>(2S)-2-hydroxy-3-oxobutyl phosphate</name>
        <dbReference type="ChEBI" id="CHEBI:58830"/>
    </ligand>
</feature>
<name>RISB_METVS</name>
<gene>
    <name evidence="1" type="primary">ribH</name>
    <name type="ordered locus">Mevan_1065</name>
</gene>
<sequence>MVNLGFVIAEFNRDLTYMMEKLAEEHAQFLGANVVCKVMVPGSFDMPLAIKTLLKKDNIDAVVTIGCVIEGDTEHDEIVVQNAARKIADLSLEFEKPVALGISGPGMTRMQAEDRIDYGKSAVEAAVKMVKRINDIKNSN</sequence>
<organism>
    <name type="scientific">Methanococcus vannielii (strain ATCC 35089 / DSM 1224 / JCM 13029 / OCM 148 / SB)</name>
    <dbReference type="NCBI Taxonomy" id="406327"/>
    <lineage>
        <taxon>Archaea</taxon>
        <taxon>Methanobacteriati</taxon>
        <taxon>Methanobacteriota</taxon>
        <taxon>Methanomada group</taxon>
        <taxon>Methanococci</taxon>
        <taxon>Methanococcales</taxon>
        <taxon>Methanococcaceae</taxon>
        <taxon>Methanococcus</taxon>
    </lineage>
</organism>
<comment type="function">
    <text evidence="1">Catalyzes the formation of 6,7-dimethyl-8-ribityllumazine by condensation of 5-amino-6-(D-ribitylamino)uracil with 3,4-dihydroxy-2-butanone 4-phosphate. This is the penultimate step in the biosynthesis of riboflavin.</text>
</comment>
<comment type="catalytic activity">
    <reaction evidence="1">
        <text>(2S)-2-hydroxy-3-oxobutyl phosphate + 5-amino-6-(D-ribitylamino)uracil = 6,7-dimethyl-8-(1-D-ribityl)lumazine + phosphate + 2 H2O + H(+)</text>
        <dbReference type="Rhea" id="RHEA:26152"/>
        <dbReference type="ChEBI" id="CHEBI:15377"/>
        <dbReference type="ChEBI" id="CHEBI:15378"/>
        <dbReference type="ChEBI" id="CHEBI:15934"/>
        <dbReference type="ChEBI" id="CHEBI:43474"/>
        <dbReference type="ChEBI" id="CHEBI:58201"/>
        <dbReference type="ChEBI" id="CHEBI:58830"/>
        <dbReference type="EC" id="2.5.1.78"/>
    </reaction>
</comment>
<comment type="pathway">
    <text evidence="1">Cofactor biosynthesis; riboflavin biosynthesis; riboflavin from 2-hydroxy-3-oxobutyl phosphate and 5-amino-6-(D-ribitylamino)uracil: step 1/2.</text>
</comment>
<comment type="subunit">
    <text evidence="1">Forms an icosahedral capsid composed of 60 subunits, arranged as a dodecamer of pentamers.</text>
</comment>
<comment type="similarity">
    <text evidence="1">Belongs to the DMRL synthase family.</text>
</comment>
<evidence type="ECO:0000255" key="1">
    <source>
        <dbReference type="HAMAP-Rule" id="MF_00178"/>
    </source>
</evidence>
<reference key="1">
    <citation type="submission" date="2007-06" db="EMBL/GenBank/DDBJ databases">
        <title>Complete sequence of Methanococcus vannielii SB.</title>
        <authorList>
            <consortium name="US DOE Joint Genome Institute"/>
            <person name="Copeland A."/>
            <person name="Lucas S."/>
            <person name="Lapidus A."/>
            <person name="Barry K."/>
            <person name="Glavina del Rio T."/>
            <person name="Dalin E."/>
            <person name="Tice H."/>
            <person name="Pitluck S."/>
            <person name="Chain P."/>
            <person name="Malfatti S."/>
            <person name="Shin M."/>
            <person name="Vergez L."/>
            <person name="Schmutz J."/>
            <person name="Larimer F."/>
            <person name="Land M."/>
            <person name="Hauser L."/>
            <person name="Kyrpides N."/>
            <person name="Anderson I."/>
            <person name="Sieprawska-Lupa M."/>
            <person name="Whitman W.B."/>
            <person name="Richardson P."/>
        </authorList>
    </citation>
    <scope>NUCLEOTIDE SEQUENCE [LARGE SCALE GENOMIC DNA]</scope>
    <source>
        <strain>ATCC 35089 / DSM 1224 / JCM 13029 / OCM 148 / SB</strain>
    </source>
</reference>
<accession>A6UR43</accession>